<sequence length="150" mass="16589">MSGKILDKMAGLLGLEDDLEEDLEEVEEETVEEEVTPLISSNTKRNNKVVSIHTAVSAKVKIIKPCSYEEAVDICDELKNRKIIIVNTTDLETKIAQRLLDFMGGASYALGGSLEEVEKSVYILAPSTVEVTNELKSQLISSKGIFNWNK</sequence>
<reference key="1">
    <citation type="submission" date="2008-10" db="EMBL/GenBank/DDBJ databases">
        <title>Genome sequence of Clostridium botulinum A2 Kyoto.</title>
        <authorList>
            <person name="Shrivastava S."/>
            <person name="Brinkac L.M."/>
            <person name="Brown J.L."/>
            <person name="Bruce D."/>
            <person name="Detter C.C."/>
            <person name="Johnson E.A."/>
            <person name="Munk C.A."/>
            <person name="Smith L.A."/>
            <person name="Smith T.J."/>
            <person name="Sutton G."/>
            <person name="Brettin T.S."/>
        </authorList>
    </citation>
    <scope>NUCLEOTIDE SEQUENCE [LARGE SCALE GENOMIC DNA]</scope>
    <source>
        <strain>Kyoto / Type A2</strain>
    </source>
</reference>
<organism>
    <name type="scientific">Clostridium botulinum (strain Kyoto / Type A2)</name>
    <dbReference type="NCBI Taxonomy" id="536232"/>
    <lineage>
        <taxon>Bacteria</taxon>
        <taxon>Bacillati</taxon>
        <taxon>Bacillota</taxon>
        <taxon>Clostridia</taxon>
        <taxon>Eubacteriales</taxon>
        <taxon>Clostridiaceae</taxon>
        <taxon>Clostridium</taxon>
    </lineage>
</organism>
<name>SEPF_CLOBJ</name>
<comment type="function">
    <text evidence="1">Cell division protein that is part of the divisome complex and is recruited early to the Z-ring. Probably stimulates Z-ring formation, perhaps through the cross-linking of FtsZ protofilaments. Its function overlaps with FtsA.</text>
</comment>
<comment type="subunit">
    <text evidence="1">Homodimer. Interacts with FtsZ.</text>
</comment>
<comment type="subcellular location">
    <subcellularLocation>
        <location evidence="1">Cytoplasm</location>
    </subcellularLocation>
    <text evidence="1">Localizes to the division site, in a FtsZ-dependent manner.</text>
</comment>
<comment type="similarity">
    <text evidence="1">Belongs to the SepF family.</text>
</comment>
<proteinExistence type="inferred from homology"/>
<gene>
    <name evidence="1" type="primary">sepF</name>
    <name type="ordered locus">CLM_1703</name>
</gene>
<accession>C1FMF8</accession>
<evidence type="ECO:0000255" key="1">
    <source>
        <dbReference type="HAMAP-Rule" id="MF_01197"/>
    </source>
</evidence>
<dbReference type="EMBL" id="CP001581">
    <property type="protein sequence ID" value="ACO84891.1"/>
    <property type="molecule type" value="Genomic_DNA"/>
</dbReference>
<dbReference type="RefSeq" id="WP_003358704.1">
    <property type="nucleotide sequence ID" value="NC_012563.1"/>
</dbReference>
<dbReference type="SMR" id="C1FMF8"/>
<dbReference type="KEGG" id="cby:CLM_1703"/>
<dbReference type="eggNOG" id="COG1799">
    <property type="taxonomic scope" value="Bacteria"/>
</dbReference>
<dbReference type="HOGENOM" id="CLU_078499_4_0_9"/>
<dbReference type="Proteomes" id="UP000001374">
    <property type="component" value="Chromosome"/>
</dbReference>
<dbReference type="GO" id="GO:0005737">
    <property type="term" value="C:cytoplasm"/>
    <property type="evidence" value="ECO:0007669"/>
    <property type="project" value="UniProtKB-SubCell"/>
</dbReference>
<dbReference type="GO" id="GO:0000917">
    <property type="term" value="P:division septum assembly"/>
    <property type="evidence" value="ECO:0007669"/>
    <property type="project" value="UniProtKB-KW"/>
</dbReference>
<dbReference type="GO" id="GO:0043093">
    <property type="term" value="P:FtsZ-dependent cytokinesis"/>
    <property type="evidence" value="ECO:0007669"/>
    <property type="project" value="UniProtKB-UniRule"/>
</dbReference>
<dbReference type="Gene3D" id="3.30.110.150">
    <property type="entry name" value="SepF-like protein"/>
    <property type="match status" value="1"/>
</dbReference>
<dbReference type="HAMAP" id="MF_01197">
    <property type="entry name" value="SepF"/>
    <property type="match status" value="1"/>
</dbReference>
<dbReference type="InterPro" id="IPR023052">
    <property type="entry name" value="Cell_div_SepF"/>
</dbReference>
<dbReference type="InterPro" id="IPR007561">
    <property type="entry name" value="Cell_div_SepF/SepF-rel"/>
</dbReference>
<dbReference type="InterPro" id="IPR038594">
    <property type="entry name" value="SepF-like_sf"/>
</dbReference>
<dbReference type="PANTHER" id="PTHR35798">
    <property type="entry name" value="CELL DIVISION PROTEIN SEPF"/>
    <property type="match status" value="1"/>
</dbReference>
<dbReference type="PANTHER" id="PTHR35798:SF1">
    <property type="entry name" value="CELL DIVISION PROTEIN SEPF"/>
    <property type="match status" value="1"/>
</dbReference>
<dbReference type="Pfam" id="PF04472">
    <property type="entry name" value="SepF"/>
    <property type="match status" value="1"/>
</dbReference>
<keyword id="KW-0131">Cell cycle</keyword>
<keyword id="KW-0132">Cell division</keyword>
<keyword id="KW-0963">Cytoplasm</keyword>
<keyword id="KW-0717">Septation</keyword>
<feature type="chain" id="PRO_1000164531" description="Cell division protein SepF">
    <location>
        <begin position="1"/>
        <end position="150"/>
    </location>
</feature>
<protein>
    <recommendedName>
        <fullName evidence="1">Cell division protein SepF</fullName>
    </recommendedName>
</protein>